<evidence type="ECO:0000255" key="1">
    <source>
        <dbReference type="HAMAP-Rule" id="MF_01168"/>
    </source>
</evidence>
<reference key="1">
    <citation type="journal article" date="2004" name="J. Bacteriol.">
        <title>Complete genome sequence of the genetically tractable hydrogenotrophic methanogen Methanococcus maripaludis.</title>
        <authorList>
            <person name="Hendrickson E.L."/>
            <person name="Kaul R."/>
            <person name="Zhou Y."/>
            <person name="Bovee D."/>
            <person name="Chapman P."/>
            <person name="Chung J."/>
            <person name="Conway de Macario E."/>
            <person name="Dodsworth J.A."/>
            <person name="Gillett W."/>
            <person name="Graham D.E."/>
            <person name="Hackett M."/>
            <person name="Haydock A.K."/>
            <person name="Kang A."/>
            <person name="Land M.L."/>
            <person name="Levy R."/>
            <person name="Lie T.J."/>
            <person name="Major T.A."/>
            <person name="Moore B.C."/>
            <person name="Porat I."/>
            <person name="Palmeiri A."/>
            <person name="Rouse G."/>
            <person name="Saenphimmachak C."/>
            <person name="Soell D."/>
            <person name="Van Dien S."/>
            <person name="Wang T."/>
            <person name="Whitman W.B."/>
            <person name="Xia Q."/>
            <person name="Zhang Y."/>
            <person name="Larimer F.W."/>
            <person name="Olson M.V."/>
            <person name="Leigh J.A."/>
        </authorList>
    </citation>
    <scope>NUCLEOTIDE SEQUENCE [LARGE SCALE GENOMIC DNA]</scope>
    <source>
        <strain>DSM 14266 / JCM 13030 / NBRC 101832 / S2 / LL</strain>
    </source>
</reference>
<proteinExistence type="inferred from homology"/>
<accession>Q6M0G7</accession>
<dbReference type="EC" id="3.2.2.-" evidence="1"/>
<dbReference type="EC" id="4.2.99.18" evidence="1"/>
<dbReference type="EMBL" id="BX950229">
    <property type="protein sequence ID" value="CAF29860.1"/>
    <property type="molecule type" value="Genomic_DNA"/>
</dbReference>
<dbReference type="RefSeq" id="WP_011170248.1">
    <property type="nucleotide sequence ID" value="NC_005791.1"/>
</dbReference>
<dbReference type="SMR" id="Q6M0G7"/>
<dbReference type="STRING" id="267377.MMP0304"/>
<dbReference type="EnsemblBacteria" id="CAF29860">
    <property type="protein sequence ID" value="CAF29860"/>
    <property type="gene ID" value="MMP0304"/>
</dbReference>
<dbReference type="GeneID" id="2761855"/>
<dbReference type="KEGG" id="mmp:MMP0304"/>
<dbReference type="PATRIC" id="fig|267377.15.peg.307"/>
<dbReference type="eggNOG" id="arCOG04144">
    <property type="taxonomic scope" value="Archaea"/>
</dbReference>
<dbReference type="HOGENOM" id="CLU_085935_0_0_2"/>
<dbReference type="OrthoDB" id="15106at2157"/>
<dbReference type="Proteomes" id="UP000000590">
    <property type="component" value="Chromosome"/>
</dbReference>
<dbReference type="GO" id="GO:0140078">
    <property type="term" value="F:class I DNA-(apurinic or apyrimidinic site) endonuclease activity"/>
    <property type="evidence" value="ECO:0007669"/>
    <property type="project" value="UniProtKB-EC"/>
</dbReference>
<dbReference type="GO" id="GO:0000702">
    <property type="term" value="F:oxidized base lesion DNA N-glycosylase activity"/>
    <property type="evidence" value="ECO:0007669"/>
    <property type="project" value="UniProtKB-UniRule"/>
</dbReference>
<dbReference type="GO" id="GO:0006284">
    <property type="term" value="P:base-excision repair"/>
    <property type="evidence" value="ECO:0007669"/>
    <property type="project" value="UniProtKB-UniRule"/>
</dbReference>
<dbReference type="Gene3D" id="1.10.340.30">
    <property type="entry name" value="Hypothetical protein, domain 2"/>
    <property type="match status" value="1"/>
</dbReference>
<dbReference type="HAMAP" id="MF_01168">
    <property type="entry name" value="AGOG"/>
    <property type="match status" value="1"/>
</dbReference>
<dbReference type="InterPro" id="IPR016544">
    <property type="entry name" value="AGOG"/>
</dbReference>
<dbReference type="InterPro" id="IPR015254">
    <property type="entry name" value="AGOG-like"/>
</dbReference>
<dbReference type="InterPro" id="IPR011257">
    <property type="entry name" value="DNA_glycosylase"/>
</dbReference>
<dbReference type="NCBIfam" id="NF009785">
    <property type="entry name" value="PRK13280.1-2"/>
    <property type="match status" value="1"/>
</dbReference>
<dbReference type="NCBIfam" id="NF009786">
    <property type="entry name" value="PRK13280.1-5"/>
    <property type="match status" value="1"/>
</dbReference>
<dbReference type="Pfam" id="PF09171">
    <property type="entry name" value="AGOG"/>
    <property type="match status" value="1"/>
</dbReference>
<dbReference type="PIRSF" id="PIRSF008955">
    <property type="entry name" value="AGOG"/>
    <property type="match status" value="1"/>
</dbReference>
<dbReference type="SUPFAM" id="SSF48150">
    <property type="entry name" value="DNA-glycosylase"/>
    <property type="match status" value="1"/>
</dbReference>
<comment type="function">
    <text evidence="1">DNA repair enzyme that is part of the base excision repair (BER) pathway; protects from oxidative damage by removing the major product of DNA oxidation, 8-oxoguanine (GO), from single- and double-stranded DNA substrates.</text>
</comment>
<comment type="catalytic activity">
    <reaction evidence="1">
        <text>2'-deoxyribonucleotide-(2'-deoxyribose 5'-phosphate)-2'-deoxyribonucleotide-DNA = a 3'-end 2'-deoxyribonucleotide-(2,3-dehydro-2,3-deoxyribose 5'-phosphate)-DNA + a 5'-end 5'-phospho-2'-deoxyribonucleoside-DNA + H(+)</text>
        <dbReference type="Rhea" id="RHEA:66592"/>
        <dbReference type="Rhea" id="RHEA-COMP:13180"/>
        <dbReference type="Rhea" id="RHEA-COMP:16897"/>
        <dbReference type="Rhea" id="RHEA-COMP:17067"/>
        <dbReference type="ChEBI" id="CHEBI:15378"/>
        <dbReference type="ChEBI" id="CHEBI:136412"/>
        <dbReference type="ChEBI" id="CHEBI:157695"/>
        <dbReference type="ChEBI" id="CHEBI:167181"/>
        <dbReference type="EC" id="4.2.99.18"/>
    </reaction>
</comment>
<comment type="domain">
    <text>Contains two alpha-helical subdomains, with the 8-oxoguanine binding site located in a cleft at their interface. Contains a helix-hairpin-helix (HhH) structural motif and a Gly/Pro-rich sequence followed by a conserved Asp (HhH-GPD motif).</text>
</comment>
<comment type="similarity">
    <text evidence="1">Belongs to the archaeal N-glycosylase/DNA lyase (AGOG) family.</text>
</comment>
<feature type="chain" id="PRO_0000185109" description="N-glycosylase/DNA lyase">
    <location>
        <begin position="1"/>
        <end position="252"/>
    </location>
</feature>
<feature type="region of interest" description="Helix-hairpin-helix">
    <location>
        <begin position="129"/>
        <end position="193"/>
    </location>
</feature>
<feature type="active site" description="Schiff-base intermediate with DNA" evidence="1">
    <location>
        <position position="153"/>
    </location>
</feature>
<feature type="active site" evidence="1">
    <location>
        <position position="185"/>
    </location>
</feature>
<feature type="binding site" evidence="1">
    <location>
        <position position="32"/>
    </location>
    <ligand>
        <name>8-oxoguanine</name>
        <dbReference type="ChEBI" id="CHEBI:52617"/>
    </ligand>
</feature>
<feature type="binding site" evidence="1">
    <location>
        <position position="60"/>
    </location>
    <ligand>
        <name>8-oxoguanine</name>
        <dbReference type="ChEBI" id="CHEBI:52617"/>
    </ligand>
</feature>
<feature type="binding site" evidence="1">
    <location>
        <position position="71"/>
    </location>
    <ligand>
        <name>8-oxoguanine</name>
        <dbReference type="ChEBI" id="CHEBI:52617"/>
    </ligand>
</feature>
<feature type="binding site" evidence="1">
    <location>
        <position position="157"/>
    </location>
    <ligand>
        <name>8-oxoguanine</name>
        <dbReference type="ChEBI" id="CHEBI:52617"/>
    </ligand>
</feature>
<feature type="binding site" evidence="1">
    <location>
        <position position="183"/>
    </location>
    <ligand>
        <name>8-oxoguanine</name>
        <dbReference type="ChEBI" id="CHEBI:52617"/>
    </ligand>
</feature>
<feature type="binding site" evidence="1">
    <location>
        <position position="219"/>
    </location>
    <ligand>
        <name>8-oxoguanine</name>
        <dbReference type="ChEBI" id="CHEBI:52617"/>
    </ligand>
</feature>
<feature type="binding site" evidence="1">
    <location>
        <position position="223"/>
    </location>
    <ligand>
        <name>8-oxoguanine</name>
        <dbReference type="ChEBI" id="CHEBI:52617"/>
    </ligand>
</feature>
<sequence length="252" mass="30106">MRNLEKINELLEIFGHFDVNFAKTMEEKIDTQYFVLENLKNSMNNDEMFIKLVILNSIVSYQLCTTGELWWEEFSKYWSKHDANNENLGESYVNFLENSKGNKRLLNVKIKRIERITPFLENLNLLDFKTYYSDMEKLLENLSKYLNSKKNSKTVVFAVKMFGYASRIVFNEFFPYPMNIEIPKDSRIEKYTLKFTDENPIKFWNEVSKTAKIPPLHIDSIIWPVLGRNFDFKSCENKLDENFRYLLKLTEL</sequence>
<keyword id="KW-0227">DNA damage</keyword>
<keyword id="KW-0228">DNA excision</keyword>
<keyword id="KW-0234">DNA repair</keyword>
<keyword id="KW-0378">Hydrolase</keyword>
<keyword id="KW-0456">Lyase</keyword>
<keyword id="KW-1185">Reference proteome</keyword>
<protein>
    <recommendedName>
        <fullName evidence="1">N-glycosylase/DNA lyase</fullName>
    </recommendedName>
    <alternativeName>
        <fullName evidence="1">8-oxoguanine DNA glycosylase</fullName>
        <ecNumber evidence="1">3.2.2.-</ecNumber>
    </alternativeName>
    <alternativeName>
        <fullName evidence="1">AGOG</fullName>
    </alternativeName>
    <alternativeName>
        <fullName evidence="1">DNA-(apurinic or apyrimidinic site) lyase</fullName>
        <shortName evidence="1">AP lyase</shortName>
        <ecNumber evidence="1">4.2.99.18</ecNumber>
    </alternativeName>
</protein>
<gene>
    <name type="ordered locus">MMP0304</name>
</gene>
<organism>
    <name type="scientific">Methanococcus maripaludis (strain DSM 14266 / JCM 13030 / NBRC 101832 / S2 / LL)</name>
    <dbReference type="NCBI Taxonomy" id="267377"/>
    <lineage>
        <taxon>Archaea</taxon>
        <taxon>Methanobacteriati</taxon>
        <taxon>Methanobacteriota</taxon>
        <taxon>Methanomada group</taxon>
        <taxon>Methanococci</taxon>
        <taxon>Methanococcales</taxon>
        <taxon>Methanococcaceae</taxon>
        <taxon>Methanococcus</taxon>
    </lineage>
</organism>
<name>AGOG_METMP</name>